<comment type="function">
    <text evidence="1">Part of the multicomponent 3-phenylpropionate dioxygenase. Converts 3-phenylpropionic acid (PP) and cinnamic acid (CI) into 3-phenylpropionate-dihydrodiol (PP-dihydrodiol) and cinnamic acid-dihydrodiol (CI-dihydrodiol), respectively.</text>
</comment>
<comment type="catalytic activity">
    <reaction evidence="1">
        <text>3-phenylpropanoate + NADH + O2 + H(+) = 3-(cis-5,6-dihydroxycyclohexa-1,3-dien-1-yl)propanoate + NAD(+)</text>
        <dbReference type="Rhea" id="RHEA:20357"/>
        <dbReference type="ChEBI" id="CHEBI:15378"/>
        <dbReference type="ChEBI" id="CHEBI:15379"/>
        <dbReference type="ChEBI" id="CHEBI:51057"/>
        <dbReference type="ChEBI" id="CHEBI:57540"/>
        <dbReference type="ChEBI" id="CHEBI:57945"/>
        <dbReference type="ChEBI" id="CHEBI:60087"/>
        <dbReference type="EC" id="1.14.12.19"/>
    </reaction>
</comment>
<comment type="catalytic activity">
    <reaction evidence="1">
        <text>(E)-cinnamate + NADH + O2 + H(+) = (2E)-3-(cis-5,6-dihydroxycyclohexa-1,3-dien-1-yl)prop-2-enoate + NAD(+)</text>
        <dbReference type="Rhea" id="RHEA:25058"/>
        <dbReference type="ChEBI" id="CHEBI:15378"/>
        <dbReference type="ChEBI" id="CHEBI:15379"/>
        <dbReference type="ChEBI" id="CHEBI:15669"/>
        <dbReference type="ChEBI" id="CHEBI:57540"/>
        <dbReference type="ChEBI" id="CHEBI:57945"/>
        <dbReference type="ChEBI" id="CHEBI:61451"/>
        <dbReference type="EC" id="1.14.12.19"/>
    </reaction>
</comment>
<comment type="pathway">
    <text evidence="1">Aromatic compound metabolism; 3-phenylpropanoate degradation.</text>
</comment>
<comment type="subunit">
    <text evidence="1">This dioxygenase system consists of four proteins: the two subunits of the hydroxylase component (HcaE and HcaF), a ferredoxin (HcaC) and a ferredoxin reductase (HcaD).</text>
</comment>
<comment type="similarity">
    <text evidence="1">Belongs to the bacterial ring-hydroxylating dioxygenase beta subunit family.</text>
</comment>
<protein>
    <recommendedName>
        <fullName evidence="1">3-phenylpropionate/cinnamic acid dioxygenase subunit beta</fullName>
        <ecNumber evidence="1">1.14.12.19</ecNumber>
    </recommendedName>
</protein>
<feature type="chain" id="PRO_1000186980" description="3-phenylpropionate/cinnamic acid dioxygenase subunit beta">
    <location>
        <begin position="1"/>
        <end position="172"/>
    </location>
</feature>
<name>HCAF_ECOSM</name>
<accession>B1LNJ5</accession>
<organism>
    <name type="scientific">Escherichia coli (strain SMS-3-5 / SECEC)</name>
    <dbReference type="NCBI Taxonomy" id="439855"/>
    <lineage>
        <taxon>Bacteria</taxon>
        <taxon>Pseudomonadati</taxon>
        <taxon>Pseudomonadota</taxon>
        <taxon>Gammaproteobacteria</taxon>
        <taxon>Enterobacterales</taxon>
        <taxon>Enterobacteriaceae</taxon>
        <taxon>Escherichia</taxon>
    </lineage>
</organism>
<dbReference type="EC" id="1.14.12.19" evidence="1"/>
<dbReference type="EMBL" id="CP000970">
    <property type="protein sequence ID" value="ACB15597.1"/>
    <property type="molecule type" value="Genomic_DNA"/>
</dbReference>
<dbReference type="RefSeq" id="WP_001276076.1">
    <property type="nucleotide sequence ID" value="NC_010498.1"/>
</dbReference>
<dbReference type="SMR" id="B1LNJ5"/>
<dbReference type="KEGG" id="ecm:EcSMS35_2692"/>
<dbReference type="HOGENOM" id="CLU_102527_1_1_6"/>
<dbReference type="UniPathway" id="UPA00714"/>
<dbReference type="Proteomes" id="UP000007011">
    <property type="component" value="Chromosome"/>
</dbReference>
<dbReference type="GO" id="GO:0008695">
    <property type="term" value="F:3-phenylpropionate dioxygenase activity"/>
    <property type="evidence" value="ECO:0007669"/>
    <property type="project" value="UniProtKB-UniRule"/>
</dbReference>
<dbReference type="GO" id="GO:0019380">
    <property type="term" value="P:3-phenylpropionate catabolic process"/>
    <property type="evidence" value="ECO:0007669"/>
    <property type="project" value="UniProtKB-UniRule"/>
</dbReference>
<dbReference type="CDD" id="cd00667">
    <property type="entry name" value="ring_hydroxylating_dioxygenases_beta"/>
    <property type="match status" value="1"/>
</dbReference>
<dbReference type="FunFam" id="3.10.450.50:FF:000008">
    <property type="entry name" value="3-phenylpropionate/cinnamic acid dioxygenase subunit beta"/>
    <property type="match status" value="1"/>
</dbReference>
<dbReference type="Gene3D" id="3.10.450.50">
    <property type="match status" value="1"/>
</dbReference>
<dbReference type="HAMAP" id="MF_01649">
    <property type="entry name" value="HcaF"/>
    <property type="match status" value="1"/>
</dbReference>
<dbReference type="InterPro" id="IPR054881">
    <property type="entry name" value="3PPDioc_HcaF"/>
</dbReference>
<dbReference type="InterPro" id="IPR023712">
    <property type="entry name" value="HcaF"/>
</dbReference>
<dbReference type="InterPro" id="IPR032710">
    <property type="entry name" value="NTF2-like_dom_sf"/>
</dbReference>
<dbReference type="InterPro" id="IPR000391">
    <property type="entry name" value="Rng_hydr_dOase-bsu"/>
</dbReference>
<dbReference type="NCBIfam" id="NF042947">
    <property type="entry name" value="3PPDioc_HcaF"/>
    <property type="match status" value="1"/>
</dbReference>
<dbReference type="NCBIfam" id="NF007479">
    <property type="entry name" value="PRK10069.1"/>
    <property type="match status" value="1"/>
</dbReference>
<dbReference type="PANTHER" id="PTHR41534:SF2">
    <property type="entry name" value="3-PHENYLPROPIONATE_CINNAMIC ACID DIOXYGENASE SUBUNIT BETA"/>
    <property type="match status" value="1"/>
</dbReference>
<dbReference type="PANTHER" id="PTHR41534">
    <property type="entry name" value="BLR3401 PROTEIN"/>
    <property type="match status" value="1"/>
</dbReference>
<dbReference type="Pfam" id="PF00866">
    <property type="entry name" value="Ring_hydroxyl_B"/>
    <property type="match status" value="1"/>
</dbReference>
<dbReference type="SUPFAM" id="SSF54427">
    <property type="entry name" value="NTF2-like"/>
    <property type="match status" value="1"/>
</dbReference>
<sequence length="172" mass="20565">MSAQVSLELHHRISQFLFHEASLLDDWKFRDWLAQLDEEIRYTMRTTVNAQTRDRRKGVQPPTTWIFNDTKDQLERRIARLETGMAWAEEPPSRTRHLISNCQVSETDIPNVFAVRVNYLLYRAQKERDETFYVGTRFDKVRRLEDDNWRLLERDIVLDQAVITSHNLSVLF</sequence>
<keyword id="KW-0058">Aromatic hydrocarbons catabolism</keyword>
<keyword id="KW-0223">Dioxygenase</keyword>
<keyword id="KW-0520">NAD</keyword>
<keyword id="KW-0560">Oxidoreductase</keyword>
<evidence type="ECO:0000255" key="1">
    <source>
        <dbReference type="HAMAP-Rule" id="MF_01649"/>
    </source>
</evidence>
<gene>
    <name evidence="1" type="primary">hcaF</name>
    <name type="ordered locus">EcSMS35_2692</name>
</gene>
<proteinExistence type="inferred from homology"/>
<reference key="1">
    <citation type="journal article" date="2008" name="J. Bacteriol.">
        <title>Insights into the environmental resistance gene pool from the genome sequence of the multidrug-resistant environmental isolate Escherichia coli SMS-3-5.</title>
        <authorList>
            <person name="Fricke W.F."/>
            <person name="Wright M.S."/>
            <person name="Lindell A.H."/>
            <person name="Harkins D.M."/>
            <person name="Baker-Austin C."/>
            <person name="Ravel J."/>
            <person name="Stepanauskas R."/>
        </authorList>
    </citation>
    <scope>NUCLEOTIDE SEQUENCE [LARGE SCALE GENOMIC DNA]</scope>
    <source>
        <strain>SMS-3-5 / SECEC</strain>
    </source>
</reference>